<name>COMD_METMP</name>
<reference key="1">
    <citation type="journal article" date="2004" name="J. Bacteriol.">
        <title>Complete genome sequence of the genetically tractable hydrogenotrophic methanogen Methanococcus maripaludis.</title>
        <authorList>
            <person name="Hendrickson E.L."/>
            <person name="Kaul R."/>
            <person name="Zhou Y."/>
            <person name="Bovee D."/>
            <person name="Chapman P."/>
            <person name="Chung J."/>
            <person name="Conway de Macario E."/>
            <person name="Dodsworth J.A."/>
            <person name="Gillett W."/>
            <person name="Graham D.E."/>
            <person name="Hackett M."/>
            <person name="Haydock A.K."/>
            <person name="Kang A."/>
            <person name="Land M.L."/>
            <person name="Levy R."/>
            <person name="Lie T.J."/>
            <person name="Major T.A."/>
            <person name="Moore B.C."/>
            <person name="Porat I."/>
            <person name="Palmeiri A."/>
            <person name="Rouse G."/>
            <person name="Saenphimmachak C."/>
            <person name="Soell D."/>
            <person name="Van Dien S."/>
            <person name="Wang T."/>
            <person name="Whitman W.B."/>
            <person name="Xia Q."/>
            <person name="Zhang Y."/>
            <person name="Larimer F.W."/>
            <person name="Olson M.V."/>
            <person name="Leigh J.A."/>
        </authorList>
    </citation>
    <scope>NUCLEOTIDE SEQUENCE [LARGE SCALE GENOMIC DNA]</scope>
    <source>
        <strain>DSM 14266 / JCM 13030 / NBRC 101832 / S2 / LL</strain>
    </source>
</reference>
<gene>
    <name type="primary">comD</name>
    <name type="ordered locus">MMP0411</name>
</gene>
<proteinExistence type="inferred from homology"/>
<sequence length="167" mass="18467">MNASEAVYKAILDSGVDFVTSVPCANLKTVLNYLNDDKDIQHIPVTREEEGIGVCTGAYLGGRKTALLMQNSGLGNSINAIGSLVKVYKIPILIIISHRGDLKEKISAQIPMGQWTKKLLETVEIPYFSPKTPDEAYKLIKDASELSINMEYPVAILLDALYWEHDK</sequence>
<feature type="chain" id="PRO_0000433482" description="Sulfopyruvate decarboxylase subunit alpha">
    <location>
        <begin position="1"/>
        <end position="167"/>
    </location>
</feature>
<dbReference type="EC" id="4.1.1.79" evidence="1"/>
<dbReference type="EMBL" id="BX950229">
    <property type="protein sequence ID" value="CAF29967.1"/>
    <property type="molecule type" value="Genomic_DNA"/>
</dbReference>
<dbReference type="RefSeq" id="WP_011170355.1">
    <property type="nucleotide sequence ID" value="NC_005791.1"/>
</dbReference>
<dbReference type="SMR" id="Q6M060"/>
<dbReference type="STRING" id="267377.MMP0411"/>
<dbReference type="DNASU" id="2761582"/>
<dbReference type="EnsemblBacteria" id="CAF29967">
    <property type="protein sequence ID" value="CAF29967"/>
    <property type="gene ID" value="MMP0411"/>
</dbReference>
<dbReference type="GeneID" id="2761582"/>
<dbReference type="KEGG" id="mmp:MMP0411"/>
<dbReference type="PATRIC" id="fig|267377.15.peg.415"/>
<dbReference type="eggNOG" id="arCOG01613">
    <property type="taxonomic scope" value="Archaea"/>
</dbReference>
<dbReference type="HOGENOM" id="CLU_113594_0_0_2"/>
<dbReference type="OrthoDB" id="53192at2157"/>
<dbReference type="UniPathway" id="UPA00355">
    <property type="reaction ID" value="UER00472"/>
</dbReference>
<dbReference type="Proteomes" id="UP000000590">
    <property type="component" value="Chromosome"/>
</dbReference>
<dbReference type="GO" id="GO:0050545">
    <property type="term" value="F:sulfopyruvate decarboxylase activity"/>
    <property type="evidence" value="ECO:0000250"/>
    <property type="project" value="UniProtKB"/>
</dbReference>
<dbReference type="GO" id="GO:0030976">
    <property type="term" value="F:thiamine pyrophosphate binding"/>
    <property type="evidence" value="ECO:0007669"/>
    <property type="project" value="InterPro"/>
</dbReference>
<dbReference type="GO" id="GO:0019295">
    <property type="term" value="P:coenzyme M biosynthetic process"/>
    <property type="evidence" value="ECO:0000250"/>
    <property type="project" value="UniProtKB"/>
</dbReference>
<dbReference type="CDD" id="cd07035">
    <property type="entry name" value="TPP_PYR_POX_like"/>
    <property type="match status" value="1"/>
</dbReference>
<dbReference type="FunFam" id="3.40.50.970:FF:000039">
    <property type="entry name" value="Indolepyruvate oxidoreductase subunit IorA"/>
    <property type="match status" value="1"/>
</dbReference>
<dbReference type="Gene3D" id="3.40.50.970">
    <property type="match status" value="1"/>
</dbReference>
<dbReference type="InterPro" id="IPR022502">
    <property type="entry name" value="Sulfopyruvate_deCO2ase_alpha"/>
</dbReference>
<dbReference type="InterPro" id="IPR029061">
    <property type="entry name" value="THDP-binding"/>
</dbReference>
<dbReference type="InterPro" id="IPR012001">
    <property type="entry name" value="Thiamin_PyroP_enz_TPP-bd_dom"/>
</dbReference>
<dbReference type="InterPro" id="IPR051818">
    <property type="entry name" value="TPP_dependent_decarboxylase"/>
</dbReference>
<dbReference type="NCBIfam" id="TIGR03845">
    <property type="entry name" value="sulfopyru_alph"/>
    <property type="match status" value="1"/>
</dbReference>
<dbReference type="PANTHER" id="PTHR42818:SF1">
    <property type="entry name" value="SULFOPYRUVATE DECARBOXYLASE"/>
    <property type="match status" value="1"/>
</dbReference>
<dbReference type="PANTHER" id="PTHR42818">
    <property type="entry name" value="SULFOPYRUVATE DECARBOXYLASE SUBUNIT ALPHA"/>
    <property type="match status" value="1"/>
</dbReference>
<dbReference type="Pfam" id="PF02776">
    <property type="entry name" value="TPP_enzyme_N"/>
    <property type="match status" value="1"/>
</dbReference>
<dbReference type="SUPFAM" id="SSF52518">
    <property type="entry name" value="Thiamin diphosphate-binding fold (THDP-binding)"/>
    <property type="match status" value="1"/>
</dbReference>
<keyword id="KW-0174">Coenzyme M biosynthesis</keyword>
<keyword id="KW-0210">Decarboxylase</keyword>
<keyword id="KW-0456">Lyase</keyword>
<keyword id="KW-1185">Reference proteome</keyword>
<organism>
    <name type="scientific">Methanococcus maripaludis (strain DSM 14266 / JCM 13030 / NBRC 101832 / S2 / LL)</name>
    <dbReference type="NCBI Taxonomy" id="267377"/>
    <lineage>
        <taxon>Archaea</taxon>
        <taxon>Methanobacteriati</taxon>
        <taxon>Methanobacteriota</taxon>
        <taxon>Methanomada group</taxon>
        <taxon>Methanococci</taxon>
        <taxon>Methanococcales</taxon>
        <taxon>Methanococcaceae</taxon>
        <taxon>Methanococcus</taxon>
    </lineage>
</organism>
<accession>Q6M060</accession>
<protein>
    <recommendedName>
        <fullName evidence="1">Sulfopyruvate decarboxylase subunit alpha</fullName>
        <ecNumber evidence="1">4.1.1.79</ecNumber>
    </recommendedName>
</protein>
<evidence type="ECO:0000250" key="1">
    <source>
        <dbReference type="UniProtKB" id="P58415"/>
    </source>
</evidence>
<comment type="function">
    <text evidence="1">Involved in the biosynthesis of the coenzyme M (2-mercaptoethanesulfonic acid). Catalyzes the decarboxylation of sulfopyruvate to sulfoacetaldehyde.</text>
</comment>
<comment type="catalytic activity">
    <reaction evidence="1">
        <text>3-sulfopyruvate + H(+) = sulfoacetaldehyde + CO2</text>
        <dbReference type="Rhea" id="RHEA:20948"/>
        <dbReference type="ChEBI" id="CHEBI:15378"/>
        <dbReference type="ChEBI" id="CHEBI:16526"/>
        <dbReference type="ChEBI" id="CHEBI:57940"/>
        <dbReference type="ChEBI" id="CHEBI:58246"/>
        <dbReference type="EC" id="4.1.1.79"/>
    </reaction>
</comment>
<comment type="pathway">
    <text evidence="1">Cofactor biosynthesis; coenzyme M biosynthesis; sulfoacetaldehyde from phosphoenolpyruvate and sulfite: step 4/4.</text>
</comment>
<comment type="subunit">
    <text evidence="1">Heterododecamer composed of 6 subunits alpha and 6 subunits beta.</text>
</comment>
<comment type="similarity">
    <text evidence="1">Belongs to the ComD family.</text>
</comment>